<keyword id="KW-0031">Aminopeptidase</keyword>
<keyword id="KW-0963">Cytoplasm</keyword>
<keyword id="KW-0378">Hydrolase</keyword>
<keyword id="KW-0479">Metal-binding</keyword>
<keyword id="KW-0482">Metalloprotease</keyword>
<keyword id="KW-0645">Protease</keyword>
<keyword id="KW-0862">Zinc</keyword>
<accession>Q1RAG7</accession>
<feature type="chain" id="PRO_0000316310" description="Mlc titration factor A">
    <location>
        <begin position="1"/>
        <end position="265"/>
    </location>
</feature>
<feature type="binding site" evidence="1">
    <location>
        <position position="111"/>
    </location>
    <ligand>
        <name>Zn(2+)</name>
        <dbReference type="ChEBI" id="CHEBI:29105"/>
    </ligand>
</feature>
<feature type="binding site" evidence="1">
    <location>
        <position position="148"/>
    </location>
    <ligand>
        <name>Zn(2+)</name>
        <dbReference type="ChEBI" id="CHEBI:29105"/>
    </ligand>
</feature>
<feature type="binding site" evidence="1">
    <location>
        <position position="152"/>
    </location>
    <ligand>
        <name>Zn(2+)</name>
        <dbReference type="ChEBI" id="CHEBI:29105"/>
    </ligand>
</feature>
<feature type="binding site" evidence="1">
    <location>
        <position position="211"/>
    </location>
    <ligand>
        <name>Zn(2+)</name>
        <dbReference type="ChEBI" id="CHEBI:29105"/>
    </ligand>
</feature>
<organism>
    <name type="scientific">Escherichia coli (strain UTI89 / UPEC)</name>
    <dbReference type="NCBI Taxonomy" id="364106"/>
    <lineage>
        <taxon>Bacteria</taxon>
        <taxon>Pseudomonadati</taxon>
        <taxon>Pseudomonadota</taxon>
        <taxon>Gammaproteobacteria</taxon>
        <taxon>Enterobacterales</taxon>
        <taxon>Enterobacteriaceae</taxon>
        <taxon>Escherichia</taxon>
    </lineage>
</organism>
<gene>
    <name evidence="1" type="primary">mtfA</name>
    <name type="ordered locus">UTI89_C2175</name>
</gene>
<comment type="function">
    <text evidence="1">Involved in the modulation of the activity of the glucose-phosphotransferase system (glucose-PTS). Interacts with the transcriptional repressor Mlc, preventing its interaction with DNA and leading to the modulation of expression of genes regulated by Mlc, including ptsG, which encodes the PTS system glucose-specific EIICB component.</text>
</comment>
<comment type="function">
    <text evidence="1">Shows zinc-dependent metallopeptidase activity.</text>
</comment>
<comment type="cofactor">
    <cofactor evidence="1">
        <name>Zn(2+)</name>
        <dbReference type="ChEBI" id="CHEBI:29105"/>
    </cofactor>
    <text evidence="1">Binds 1 zinc ion per subunit.</text>
</comment>
<comment type="subunit">
    <text evidence="1">Interacts with Mlc.</text>
</comment>
<comment type="subcellular location">
    <subcellularLocation>
        <location evidence="1">Cytoplasm</location>
    </subcellularLocation>
</comment>
<comment type="similarity">
    <text evidence="1">Belongs to the MtfA family.</text>
</comment>
<comment type="sequence caution" evidence="2">
    <conflict type="erroneous initiation">
        <sequence resource="EMBL-CDS" id="ABE07647"/>
    </conflict>
</comment>
<name>MTFA_ECOUT</name>
<evidence type="ECO:0000255" key="1">
    <source>
        <dbReference type="HAMAP-Rule" id="MF_01593"/>
    </source>
</evidence>
<evidence type="ECO:0000305" key="2"/>
<sequence length="265" mass="30308">MIKWPWKVQESAHQTALPWQEALSIPLLTCLTEQEQSKLVTLAERFLQQKRLVPLQGFELNSLRSCRIALLFCLPVLELGLEWLDSFHEVLIYPAPFVVDDEWEDDIGLVHNQRIVQSGQSWQQGPIVLNWLDIQDSFDASGFNLIIHEVAHKLDTRNGDRASGVPFIPLREVAGWEHDLHAAMNNIQEEIELVGENAASIDAYAASDPAECFAVLSEYFFSAPELFAPRFPSLWQRFCQFYQQDPLQRLHHANDTDSFSATNVH</sequence>
<reference key="1">
    <citation type="journal article" date="2006" name="Proc. Natl. Acad. Sci. U.S.A.">
        <title>Identification of genes subject to positive selection in uropathogenic strains of Escherichia coli: a comparative genomics approach.</title>
        <authorList>
            <person name="Chen S.L."/>
            <person name="Hung C.-S."/>
            <person name="Xu J."/>
            <person name="Reigstad C.S."/>
            <person name="Magrini V."/>
            <person name="Sabo A."/>
            <person name="Blasiar D."/>
            <person name="Bieri T."/>
            <person name="Meyer R.R."/>
            <person name="Ozersky P."/>
            <person name="Armstrong J.R."/>
            <person name="Fulton R.S."/>
            <person name="Latreille J.P."/>
            <person name="Spieth J."/>
            <person name="Hooton T.M."/>
            <person name="Mardis E.R."/>
            <person name="Hultgren S.J."/>
            <person name="Gordon J.I."/>
        </authorList>
    </citation>
    <scope>NUCLEOTIDE SEQUENCE [LARGE SCALE GENOMIC DNA]</scope>
    <source>
        <strain>UTI89 / UPEC</strain>
    </source>
</reference>
<protein>
    <recommendedName>
        <fullName evidence="1">Mlc titration factor A</fullName>
    </recommendedName>
    <alternativeName>
        <fullName evidence="1">Probable zinc metallopeptidase MtfA</fullName>
        <ecNumber evidence="1">3.4.11.-</ecNumber>
    </alternativeName>
</protein>
<dbReference type="EC" id="3.4.11.-" evidence="1"/>
<dbReference type="EMBL" id="CP000243">
    <property type="protein sequence ID" value="ABE07647.1"/>
    <property type="status" value="ALT_INIT"/>
    <property type="molecule type" value="Genomic_DNA"/>
</dbReference>
<dbReference type="RefSeq" id="WP_001350677.1">
    <property type="nucleotide sequence ID" value="NZ_CP064825.1"/>
</dbReference>
<dbReference type="SMR" id="Q1RAG7"/>
<dbReference type="MEROPS" id="M90.001"/>
<dbReference type="KEGG" id="eci:UTI89_C2175"/>
<dbReference type="HOGENOM" id="CLU_063037_0_1_6"/>
<dbReference type="Proteomes" id="UP000001952">
    <property type="component" value="Chromosome"/>
</dbReference>
<dbReference type="GO" id="GO:0005829">
    <property type="term" value="C:cytosol"/>
    <property type="evidence" value="ECO:0007669"/>
    <property type="project" value="TreeGrafter"/>
</dbReference>
<dbReference type="GO" id="GO:0004177">
    <property type="term" value="F:aminopeptidase activity"/>
    <property type="evidence" value="ECO:0007669"/>
    <property type="project" value="UniProtKB-UniRule"/>
</dbReference>
<dbReference type="GO" id="GO:0008237">
    <property type="term" value="F:metallopeptidase activity"/>
    <property type="evidence" value="ECO:0007669"/>
    <property type="project" value="UniProtKB-UniRule"/>
</dbReference>
<dbReference type="GO" id="GO:0008270">
    <property type="term" value="F:zinc ion binding"/>
    <property type="evidence" value="ECO:0007669"/>
    <property type="project" value="UniProtKB-UniRule"/>
</dbReference>
<dbReference type="GO" id="GO:0006508">
    <property type="term" value="P:proteolysis"/>
    <property type="evidence" value="ECO:0007669"/>
    <property type="project" value="UniProtKB-KW"/>
</dbReference>
<dbReference type="CDD" id="cd20169">
    <property type="entry name" value="Peptidase_M90_mtfA"/>
    <property type="match status" value="1"/>
</dbReference>
<dbReference type="FunFam" id="1.10.472.150:FF:000001">
    <property type="entry name" value="Protein MtfA"/>
    <property type="match status" value="1"/>
</dbReference>
<dbReference type="FunFam" id="3.40.390.10:FF:000012">
    <property type="entry name" value="Protein MtfA"/>
    <property type="match status" value="1"/>
</dbReference>
<dbReference type="Gene3D" id="3.40.390.10">
    <property type="entry name" value="Collagenase (Catalytic Domain)"/>
    <property type="match status" value="1"/>
</dbReference>
<dbReference type="Gene3D" id="1.10.472.150">
    <property type="entry name" value="Glucose-regulated metallo-peptidase M90, N-terminal domain"/>
    <property type="match status" value="1"/>
</dbReference>
<dbReference type="HAMAP" id="MF_01593">
    <property type="entry name" value="MtfA"/>
    <property type="match status" value="1"/>
</dbReference>
<dbReference type="InterPro" id="IPR024079">
    <property type="entry name" value="MetalloPept_cat_dom_sf"/>
</dbReference>
<dbReference type="InterPro" id="IPR057256">
    <property type="entry name" value="MtfA_enterob"/>
</dbReference>
<dbReference type="InterPro" id="IPR010384">
    <property type="entry name" value="MtfA_fam"/>
</dbReference>
<dbReference type="InterPro" id="IPR042252">
    <property type="entry name" value="MtfA_N"/>
</dbReference>
<dbReference type="NCBIfam" id="NF011939">
    <property type="entry name" value="PRK15410.1"/>
    <property type="match status" value="1"/>
</dbReference>
<dbReference type="PANTHER" id="PTHR30164">
    <property type="entry name" value="MTFA PEPTIDASE"/>
    <property type="match status" value="1"/>
</dbReference>
<dbReference type="PANTHER" id="PTHR30164:SF2">
    <property type="entry name" value="PROTEIN MTFA"/>
    <property type="match status" value="1"/>
</dbReference>
<dbReference type="Pfam" id="PF06167">
    <property type="entry name" value="Peptidase_M90"/>
    <property type="match status" value="1"/>
</dbReference>
<dbReference type="SUPFAM" id="SSF55486">
    <property type="entry name" value="Metalloproteases ('zincins'), catalytic domain"/>
    <property type="match status" value="1"/>
</dbReference>
<proteinExistence type="inferred from homology"/>